<protein>
    <recommendedName>
        <fullName>Protein farnesyltransferase subunit beta</fullName>
        <shortName>FTase-beta</shortName>
        <ecNumber>2.5.1.58</ecNumber>
    </recommendedName>
    <alternativeName>
        <fullName>CAAX farnesyltransferase subunit beta</fullName>
    </alternativeName>
    <alternativeName>
        <fullName>Ras proteins prenyltransferase subunit beta</fullName>
    </alternativeName>
</protein>
<dbReference type="EC" id="2.5.1.58"/>
<dbReference type="EMBL" id="L08664">
    <property type="protein sequence ID" value="AAA33649.1"/>
    <property type="molecule type" value="mRNA"/>
</dbReference>
<dbReference type="PIR" id="JQ2254">
    <property type="entry name" value="JQ2254"/>
</dbReference>
<dbReference type="SMR" id="Q04903"/>
<dbReference type="OrthoDB" id="10261146at2759"/>
<dbReference type="GO" id="GO:0005965">
    <property type="term" value="C:protein farnesyltransferase complex"/>
    <property type="evidence" value="ECO:0000250"/>
    <property type="project" value="UniProtKB"/>
</dbReference>
<dbReference type="GO" id="GO:0004660">
    <property type="term" value="F:protein farnesyltransferase activity"/>
    <property type="evidence" value="ECO:0000250"/>
    <property type="project" value="UniProtKB"/>
</dbReference>
<dbReference type="GO" id="GO:0008270">
    <property type="term" value="F:zinc ion binding"/>
    <property type="evidence" value="ECO:0000250"/>
    <property type="project" value="UniProtKB"/>
</dbReference>
<dbReference type="GO" id="GO:0018343">
    <property type="term" value="P:protein farnesylation"/>
    <property type="evidence" value="ECO:0000250"/>
    <property type="project" value="UniProtKB"/>
</dbReference>
<dbReference type="CDD" id="cd02893">
    <property type="entry name" value="FTase"/>
    <property type="match status" value="1"/>
</dbReference>
<dbReference type="FunFam" id="1.50.10.20:FF:000017">
    <property type="entry name" value="Protein farnesyltransferase subunit beta"/>
    <property type="match status" value="1"/>
</dbReference>
<dbReference type="Gene3D" id="1.50.10.20">
    <property type="match status" value="1"/>
</dbReference>
<dbReference type="InterPro" id="IPR026872">
    <property type="entry name" value="FTB"/>
</dbReference>
<dbReference type="InterPro" id="IPR045089">
    <property type="entry name" value="PGGT1B-like"/>
</dbReference>
<dbReference type="InterPro" id="IPR001330">
    <property type="entry name" value="Prenyltrans"/>
</dbReference>
<dbReference type="InterPro" id="IPR008930">
    <property type="entry name" value="Terpenoid_cyclase/PrenylTrfase"/>
</dbReference>
<dbReference type="PANTHER" id="PTHR11774">
    <property type="entry name" value="GERANYLGERANYL TRANSFERASE TYPE BETA SUBUNIT"/>
    <property type="match status" value="1"/>
</dbReference>
<dbReference type="PANTHER" id="PTHR11774:SF6">
    <property type="entry name" value="PROTEIN FARNESYLTRANSFERASE SUBUNIT BETA"/>
    <property type="match status" value="1"/>
</dbReference>
<dbReference type="Pfam" id="PF00432">
    <property type="entry name" value="Prenyltrans"/>
    <property type="match status" value="1"/>
</dbReference>
<dbReference type="SUPFAM" id="SSF48239">
    <property type="entry name" value="Terpenoid cyclases/Protein prenyltransferases"/>
    <property type="match status" value="1"/>
</dbReference>
<sequence length="419" mass="46794">MEASTAAETPTPTVSQRDQWIVESQVFHIYQLFANIPPNAQSIIRPWLCYWIIHSIALLGESIDDDLEDNTVDFLNRCQDPNGGYAGGPGQMPHLATTYAAVNTLITLGGEKSLASINRNKLYGFMRRMKQPNGGFRMHDEGEIDVRACYTAISVASVLNILDDELIKNVGDFILSCQTYEGGLAGEPGSEAHGGYTFCGLAAMILIGEVNRLDLPRLLDWVVFRQGKECGFQGRTNKLVDGCYSFWQGGAVALLQRLHSIIDEQMAEASQFVTVSDAPEEKECLDGTSSHATSHIRHEGMNESCSSDVKNIGYNFISEWRQSEPLFHSIALQQYILLCSQEQDGGLRDKPGKRRDHYHSCYCLSGLSLCQYSWSKRPDSPPLPKVVMGPYSNLLEPIHPLFNVVLDRYREAHEFFSQL</sequence>
<gene>
    <name type="primary">FTB</name>
</gene>
<organism>
    <name type="scientific">Pisum sativum</name>
    <name type="common">Garden pea</name>
    <name type="synonym">Lathyrus oleraceus</name>
    <dbReference type="NCBI Taxonomy" id="3888"/>
    <lineage>
        <taxon>Eukaryota</taxon>
        <taxon>Viridiplantae</taxon>
        <taxon>Streptophyta</taxon>
        <taxon>Embryophyta</taxon>
        <taxon>Tracheophyta</taxon>
        <taxon>Spermatophyta</taxon>
        <taxon>Magnoliopsida</taxon>
        <taxon>eudicotyledons</taxon>
        <taxon>Gunneridae</taxon>
        <taxon>Pentapetalae</taxon>
        <taxon>rosids</taxon>
        <taxon>fabids</taxon>
        <taxon>Fabales</taxon>
        <taxon>Fabaceae</taxon>
        <taxon>Papilionoideae</taxon>
        <taxon>50 kb inversion clade</taxon>
        <taxon>NPAAA clade</taxon>
        <taxon>Hologalegina</taxon>
        <taxon>IRL clade</taxon>
        <taxon>Fabeae</taxon>
        <taxon>Pisum</taxon>
    </lineage>
</organism>
<keyword id="KW-0479">Metal-binding</keyword>
<keyword id="KW-0637">Prenyltransferase</keyword>
<keyword id="KW-0677">Repeat</keyword>
<keyword id="KW-0808">Transferase</keyword>
<keyword id="KW-0862">Zinc</keyword>
<reference key="1">
    <citation type="journal article" date="1993" name="Plant Physiol.">
        <title>Protein farnesyltransferase in plants. Molecular cloning and expression of a homolog of the beta subunit from the garden pea.</title>
        <authorList>
            <person name="Yang Z."/>
            <person name="Cramer C.L."/>
            <person name="Watson J.C."/>
        </authorList>
    </citation>
    <scope>NUCLEOTIDE SEQUENCE [MRNA]</scope>
    <scope>FUNCTION</scope>
    <scope>SUBUNIT</scope>
    <scope>CATALYTIC ACTIVITY</scope>
    <scope>COFACTOR</scope>
    <source>
        <strain>cv. Alaska</strain>
        <tissue>Seedling</tissue>
    </source>
</reference>
<feature type="chain" id="PRO_0000119765" description="Protein farnesyltransferase subunit beta">
    <location>
        <begin position="1"/>
        <end position="419"/>
    </location>
</feature>
<feature type="repeat" description="PFTB 1">
    <location>
        <begin position="68"/>
        <end position="109"/>
    </location>
</feature>
<feature type="repeat" description="PFTB 2">
    <location>
        <begin position="119"/>
        <end position="160"/>
    </location>
</feature>
<feature type="repeat" description="PFTB 3">
    <location>
        <begin position="167"/>
        <end position="208"/>
    </location>
</feature>
<feature type="repeat" description="PFTB 4">
    <location>
        <begin position="215"/>
        <end position="256"/>
    </location>
</feature>
<feature type="repeat" description="PFTB 5">
    <location>
        <begin position="329"/>
        <end position="371"/>
    </location>
</feature>
<feature type="binding site" evidence="1">
    <location>
        <begin position="193"/>
        <end position="196"/>
    </location>
    <ligand>
        <name>(2E,6E)-farnesyl diphosphate</name>
        <dbReference type="ChEBI" id="CHEBI:175763"/>
    </ligand>
</feature>
<feature type="binding site" evidence="1">
    <location>
        <begin position="235"/>
        <end position="238"/>
    </location>
    <ligand>
        <name>(2E,6E)-farnesyl diphosphate</name>
        <dbReference type="ChEBI" id="CHEBI:175763"/>
    </ligand>
</feature>
<feature type="binding site" evidence="1">
    <location>
        <position position="241"/>
    </location>
    <ligand>
        <name>Zn(2+)</name>
        <dbReference type="ChEBI" id="CHEBI:29105"/>
        <note>catalytic</note>
    </ligand>
</feature>
<feature type="binding site" evidence="1">
    <location>
        <position position="243"/>
    </location>
    <ligand>
        <name>Zn(2+)</name>
        <dbReference type="ChEBI" id="CHEBI:29105"/>
        <note>catalytic</note>
    </ligand>
</feature>
<feature type="binding site" evidence="1">
    <location>
        <begin position="244"/>
        <end position="247"/>
    </location>
    <ligand>
        <name>(2E,6E)-farnesyl diphosphate</name>
        <dbReference type="ChEBI" id="CHEBI:175763"/>
    </ligand>
</feature>
<feature type="binding site" evidence="1">
    <location>
        <position position="359"/>
    </location>
    <ligand>
        <name>Zn(2+)</name>
        <dbReference type="ChEBI" id="CHEBI:29105"/>
        <note>catalytic</note>
    </ligand>
</feature>
<feature type="site" description="Important for selectivity against geranylgeranyl diphosphate" evidence="1">
    <location>
        <position position="47"/>
    </location>
</feature>
<proteinExistence type="evidence at protein level"/>
<evidence type="ECO:0000250" key="1">
    <source>
        <dbReference type="UniProtKB" id="P49356"/>
    </source>
</evidence>
<evidence type="ECO:0000269" key="2">
    <source>
    </source>
</evidence>
<evidence type="ECO:0000305" key="3"/>
<accession>Q04903</accession>
<name>FNTB_PEA</name>
<comment type="function">
    <text evidence="2">Catalyzes the transfer of a farnesyl moiety from farnesyl diphosphate to a cysteine at the fourth position from the C-terminus of several proteins. The beta subunit FTB is responsible for peptide-binding.</text>
</comment>
<comment type="catalytic activity">
    <reaction evidence="2">
        <text>L-cysteinyl-[protein] + (2E,6E)-farnesyl diphosphate = S-(2E,6E)-farnesyl-L-cysteinyl-[protein] + diphosphate</text>
        <dbReference type="Rhea" id="RHEA:13345"/>
        <dbReference type="Rhea" id="RHEA-COMP:10131"/>
        <dbReference type="Rhea" id="RHEA-COMP:11535"/>
        <dbReference type="ChEBI" id="CHEBI:29950"/>
        <dbReference type="ChEBI" id="CHEBI:33019"/>
        <dbReference type="ChEBI" id="CHEBI:86019"/>
        <dbReference type="ChEBI" id="CHEBI:175763"/>
        <dbReference type="EC" id="2.5.1.58"/>
    </reaction>
</comment>
<comment type="cofactor">
    <cofactor evidence="2">
        <name>Zn(2+)</name>
        <dbReference type="ChEBI" id="CHEBI:29105"/>
    </cofactor>
    <text evidence="2">Binds 1 zinc ion per subunit.</text>
</comment>
<comment type="subunit">
    <text evidence="2">Heterodimer of FTA and FTB.</text>
</comment>
<comment type="similarity">
    <text evidence="3">Belongs to the protein prenyltransferase subunit beta family.</text>
</comment>